<sequence>MSDPGFLAAPVLLLLLVSLASASLEQAASRDDDSAERPLSKRHSEGTFTSDYSKYLENKQAKDFVRWLMNAKRGGSELQRRHADGTFTNDMTSYLDAKAARDFVSWLARSDKSRRDGGDHLAENSEDKRHAEDVNALLDRTMAKTFIEWLEKQNSNDQTD</sequence>
<accession>Q9PUR1</accession>
<accession>Q9PRZ7</accession>
<accession>Q9PRZ8</accession>
<keyword id="KW-0165">Cleavage on pair of basic residues</keyword>
<keyword id="KW-0903">Direct protein sequencing</keyword>
<keyword id="KW-0372">Hormone</keyword>
<keyword id="KW-0964">Secreted</keyword>
<keyword id="KW-0732">Signal</keyword>
<name>GLUC1_PETMA</name>
<feature type="signal peptide" evidence="3">
    <location>
        <begin position="1"/>
        <end position="22"/>
    </location>
</feature>
<feature type="propeptide" id="PRO_0000011371" evidence="1">
    <location>
        <begin position="23"/>
        <end position="40"/>
    </location>
</feature>
<feature type="peptide" id="PRO_0000011372" description="Glucagon-1">
    <location>
        <begin position="43"/>
        <end position="71"/>
    </location>
</feature>
<feature type="propeptide" id="PRO_0000011373" evidence="1">
    <location>
        <begin position="74"/>
        <end position="79"/>
    </location>
</feature>
<feature type="peptide" id="PRO_0000011374" description="Glucagon-like peptide 1-I">
    <location>
        <begin position="82"/>
        <end position="113"/>
    </location>
</feature>
<feature type="propeptide" id="PRO_0000011375" evidence="1">
    <location>
        <begin position="116"/>
        <end position="127"/>
    </location>
</feature>
<feature type="peptide" id="PRO_0000011376" description="Glucagon-like peptide 2-I" evidence="1">
    <location>
        <begin position="130"/>
        <end position="160"/>
    </location>
</feature>
<feature type="region of interest" description="Disordered" evidence="2">
    <location>
        <begin position="112"/>
        <end position="132"/>
    </location>
</feature>
<comment type="function">
    <text>Promotes hydrolysis of glycogen and lipids, and raises the blood sugar level.</text>
</comment>
<comment type="subcellular location">
    <subcellularLocation>
        <location>Secreted</location>
    </subcellularLocation>
</comment>
<comment type="similarity">
    <text evidence="3">Belongs to the glucagon family.</text>
</comment>
<proteinExistence type="evidence at protein level"/>
<dbReference type="EMBL" id="AF159707">
    <property type="protein sequence ID" value="AAF09186.1"/>
    <property type="molecule type" value="mRNA"/>
</dbReference>
<dbReference type="SMR" id="Q9PUR1"/>
<dbReference type="STRING" id="7757.ENSPMAP00000002387"/>
<dbReference type="Proteomes" id="UP001318040">
    <property type="component" value="Unplaced"/>
</dbReference>
<dbReference type="GO" id="GO:0005576">
    <property type="term" value="C:extracellular region"/>
    <property type="evidence" value="ECO:0007669"/>
    <property type="project" value="UniProtKB-SubCell"/>
</dbReference>
<dbReference type="GO" id="GO:0031769">
    <property type="term" value="F:glucagon receptor binding"/>
    <property type="evidence" value="ECO:0007669"/>
    <property type="project" value="TreeGrafter"/>
</dbReference>
<dbReference type="GO" id="GO:0005179">
    <property type="term" value="F:hormone activity"/>
    <property type="evidence" value="ECO:0007669"/>
    <property type="project" value="UniProtKB-KW"/>
</dbReference>
<dbReference type="GO" id="GO:0042594">
    <property type="term" value="P:response to starvation"/>
    <property type="evidence" value="ECO:0007669"/>
    <property type="project" value="TreeGrafter"/>
</dbReference>
<dbReference type="Gene3D" id="6.10.250.590">
    <property type="match status" value="2"/>
</dbReference>
<dbReference type="InterPro" id="IPR015550">
    <property type="entry name" value="Glucagon"/>
</dbReference>
<dbReference type="InterPro" id="IPR000532">
    <property type="entry name" value="Glucagon_GIP_secretin_VIP"/>
</dbReference>
<dbReference type="PANTHER" id="PTHR11418">
    <property type="entry name" value="GLUCAGON"/>
    <property type="match status" value="1"/>
</dbReference>
<dbReference type="PANTHER" id="PTHR11418:SF0">
    <property type="entry name" value="PRO-GLUCAGON"/>
    <property type="match status" value="1"/>
</dbReference>
<dbReference type="Pfam" id="PF00123">
    <property type="entry name" value="Hormone_2"/>
    <property type="match status" value="2"/>
</dbReference>
<dbReference type="PRINTS" id="PR00275">
    <property type="entry name" value="GLUCAGON"/>
</dbReference>
<dbReference type="SMART" id="SM00070">
    <property type="entry name" value="GLUCA"/>
    <property type="match status" value="3"/>
</dbReference>
<dbReference type="PROSITE" id="PS00260">
    <property type="entry name" value="GLUCAGON"/>
    <property type="match status" value="2"/>
</dbReference>
<organism>
    <name type="scientific">Petromyzon marinus</name>
    <name type="common">Sea lamprey</name>
    <dbReference type="NCBI Taxonomy" id="7757"/>
    <lineage>
        <taxon>Eukaryota</taxon>
        <taxon>Metazoa</taxon>
        <taxon>Chordata</taxon>
        <taxon>Craniata</taxon>
        <taxon>Vertebrata</taxon>
        <taxon>Cyclostomata</taxon>
        <taxon>Hyperoartia</taxon>
        <taxon>Petromyzontiformes</taxon>
        <taxon>Petromyzontidae</taxon>
        <taxon>Petromyzon</taxon>
    </lineage>
</organism>
<reference evidence="3" key="1">
    <citation type="journal article" date="1999" name="Mol. Biol. Evol.">
        <title>Lamprey proglucagon and the origin of glucagon-like peptides.</title>
        <authorList>
            <person name="Irwin D.M."/>
            <person name="Huner O."/>
            <person name="Youson J.H."/>
        </authorList>
    </citation>
    <scope>NUCLEOTIDE SEQUENCE [MRNA]</scope>
    <source>
        <tissue>Intestine</tissue>
    </source>
</reference>
<reference evidence="3" key="2">
    <citation type="journal article" date="1993" name="Gen. Comp. Endocrinol.">
        <title>Primary structures of glucagon and glucagon-like peptide isolated from the intestine of the parasitic phase lamprey Petromyzon marinus.</title>
        <authorList>
            <person name="Conlon J.M."/>
            <person name="Nielsen P.F."/>
            <person name="Youson J.H."/>
        </authorList>
    </citation>
    <scope>PROTEIN SEQUENCE OF 43-71 AND 82-113</scope>
    <source>
        <tissue>Intestine</tissue>
    </source>
</reference>
<protein>
    <recommendedName>
        <fullName>Glucagon-1</fullName>
    </recommendedName>
    <component>
        <recommendedName>
            <fullName>Glucagon-1</fullName>
        </recommendedName>
        <alternativeName>
            <fullName>Glucagon I</fullName>
        </alternativeName>
    </component>
    <component>
        <recommendedName>
            <fullName>Glucagon-like peptide 1-I</fullName>
            <shortName>GLP-1I</shortName>
        </recommendedName>
    </component>
    <component>
        <recommendedName>
            <fullName>Glucagon-like peptide 2-I</fullName>
            <shortName>GLP-2I</shortName>
        </recommendedName>
    </component>
</protein>
<gene>
    <name type="primary">gcg1</name>
</gene>
<evidence type="ECO:0000250" key="1"/>
<evidence type="ECO:0000256" key="2">
    <source>
        <dbReference type="SAM" id="MobiDB-lite"/>
    </source>
</evidence>
<evidence type="ECO:0000305" key="3"/>